<comment type="function">
    <text evidence="1">Catalyzes the formation of sulfite from phosphoadenosine 5'-phosphosulfate (PAPS) using thioredoxin as an electron donor.</text>
</comment>
<comment type="catalytic activity">
    <reaction evidence="1">
        <text>[thioredoxin]-disulfide + sulfite + adenosine 3',5'-bisphosphate + 2 H(+) = [thioredoxin]-dithiol + 3'-phosphoadenylyl sulfate</text>
        <dbReference type="Rhea" id="RHEA:11724"/>
        <dbReference type="Rhea" id="RHEA-COMP:10698"/>
        <dbReference type="Rhea" id="RHEA-COMP:10700"/>
        <dbReference type="ChEBI" id="CHEBI:15378"/>
        <dbReference type="ChEBI" id="CHEBI:17359"/>
        <dbReference type="ChEBI" id="CHEBI:29950"/>
        <dbReference type="ChEBI" id="CHEBI:50058"/>
        <dbReference type="ChEBI" id="CHEBI:58339"/>
        <dbReference type="ChEBI" id="CHEBI:58343"/>
        <dbReference type="EC" id="1.8.4.8"/>
    </reaction>
</comment>
<comment type="pathway">
    <text evidence="1">Sulfur metabolism; hydrogen sulfide biosynthesis; sulfite from sulfate: step 3/3.</text>
</comment>
<comment type="subcellular location">
    <subcellularLocation>
        <location evidence="1">Cytoplasm</location>
    </subcellularLocation>
</comment>
<comment type="similarity">
    <text evidence="1">Belongs to the PAPS reductase family. CysH subfamily.</text>
</comment>
<accession>Q0T1I6</accession>
<keyword id="KW-0963">Cytoplasm</keyword>
<keyword id="KW-0560">Oxidoreductase</keyword>
<feature type="chain" id="PRO_1000008938" description="Phosphoadenosine 5'-phosphosulfate reductase">
    <location>
        <begin position="1"/>
        <end position="244"/>
    </location>
</feature>
<feature type="active site" description="Nucleophile; cysteine thiosulfonate intermediate" evidence="1">
    <location>
        <position position="239"/>
    </location>
</feature>
<sequence>MSKLDLNALNELPKVDRILALAETNAELEKLDAEGRVAWALDNLPGEYVLSSSFGIQAAVSLHLVNQIHPDIPVILTDTGYLFPETYRFIDELTDKLKLNLKVYRATESAAWQEARYGKLWEQGVEGIEKYNDINKVEPMNRALKELNAQTWFAGLRREQSGSRANLPVLAIQRGVFKVLPIIDWDNRTIYQYLQKHGLKYHPLWDDGYLSVGDTHTTRKWEPGMAEEETRFFGLKRECGLHEG</sequence>
<evidence type="ECO:0000255" key="1">
    <source>
        <dbReference type="HAMAP-Rule" id="MF_00063"/>
    </source>
</evidence>
<reference key="1">
    <citation type="journal article" date="2006" name="BMC Genomics">
        <title>Complete genome sequence of Shigella flexneri 5b and comparison with Shigella flexneri 2a.</title>
        <authorList>
            <person name="Nie H."/>
            <person name="Yang F."/>
            <person name="Zhang X."/>
            <person name="Yang J."/>
            <person name="Chen L."/>
            <person name="Wang J."/>
            <person name="Xiong Z."/>
            <person name="Peng J."/>
            <person name="Sun L."/>
            <person name="Dong J."/>
            <person name="Xue Y."/>
            <person name="Xu X."/>
            <person name="Chen S."/>
            <person name="Yao Z."/>
            <person name="Shen Y."/>
            <person name="Jin Q."/>
        </authorList>
    </citation>
    <scope>NUCLEOTIDE SEQUENCE [LARGE SCALE GENOMIC DNA]</scope>
    <source>
        <strain>8401</strain>
    </source>
</reference>
<protein>
    <recommendedName>
        <fullName evidence="1">Phosphoadenosine 5'-phosphosulfate reductase</fullName>
        <shortName evidence="1">PAPS reductase</shortName>
        <ecNumber evidence="1">1.8.4.8</ecNumber>
    </recommendedName>
    <alternativeName>
        <fullName evidence="1">3'-phosphoadenylylsulfate reductase</fullName>
    </alternativeName>
    <alternativeName>
        <fullName evidence="1">PAPS reductase, thioredoxin dependent</fullName>
    </alternativeName>
    <alternativeName>
        <fullName evidence="1">PAPS sulfotransferase</fullName>
    </alternativeName>
    <alternativeName>
        <fullName evidence="1">PAdoPS reductase</fullName>
    </alternativeName>
</protein>
<dbReference type="EC" id="1.8.4.8" evidence="1"/>
<dbReference type="EMBL" id="CP000266">
    <property type="protein sequence ID" value="ABF04829.1"/>
    <property type="molecule type" value="Genomic_DNA"/>
</dbReference>
<dbReference type="RefSeq" id="WP_000039839.1">
    <property type="nucleotide sequence ID" value="NC_008258.1"/>
</dbReference>
<dbReference type="SMR" id="Q0T1I6"/>
<dbReference type="KEGG" id="sfv:SFV_2743"/>
<dbReference type="HOGENOM" id="CLU_044089_3_0_6"/>
<dbReference type="UniPathway" id="UPA00140">
    <property type="reaction ID" value="UER00206"/>
</dbReference>
<dbReference type="Proteomes" id="UP000000659">
    <property type="component" value="Chromosome"/>
</dbReference>
<dbReference type="GO" id="GO:0005737">
    <property type="term" value="C:cytoplasm"/>
    <property type="evidence" value="ECO:0007669"/>
    <property type="project" value="UniProtKB-SubCell"/>
</dbReference>
<dbReference type="GO" id="GO:0004604">
    <property type="term" value="F:phosphoadenylyl-sulfate reductase (thioredoxin) activity"/>
    <property type="evidence" value="ECO:0007669"/>
    <property type="project" value="UniProtKB-UniRule"/>
</dbReference>
<dbReference type="GO" id="GO:0070814">
    <property type="term" value="P:hydrogen sulfide biosynthetic process"/>
    <property type="evidence" value="ECO:0007669"/>
    <property type="project" value="UniProtKB-UniRule"/>
</dbReference>
<dbReference type="GO" id="GO:0019379">
    <property type="term" value="P:sulfate assimilation, phosphoadenylyl sulfate reduction by phosphoadenylyl-sulfate reductase (thioredoxin)"/>
    <property type="evidence" value="ECO:0007669"/>
    <property type="project" value="UniProtKB-UniRule"/>
</dbReference>
<dbReference type="CDD" id="cd23945">
    <property type="entry name" value="PAPS_reductase"/>
    <property type="match status" value="1"/>
</dbReference>
<dbReference type="FunFam" id="3.40.50.620:FF:000043">
    <property type="entry name" value="Phosphoadenosine phosphosulfate reductase"/>
    <property type="match status" value="1"/>
</dbReference>
<dbReference type="Gene3D" id="3.40.50.620">
    <property type="entry name" value="HUPs"/>
    <property type="match status" value="1"/>
</dbReference>
<dbReference type="HAMAP" id="MF_00063">
    <property type="entry name" value="CysH"/>
    <property type="match status" value="1"/>
</dbReference>
<dbReference type="InterPro" id="IPR004511">
    <property type="entry name" value="PAPS/APS_Rdtase"/>
</dbReference>
<dbReference type="InterPro" id="IPR002500">
    <property type="entry name" value="PAPS_reduct_dom"/>
</dbReference>
<dbReference type="InterPro" id="IPR011800">
    <property type="entry name" value="PAPS_reductase_CysH"/>
</dbReference>
<dbReference type="InterPro" id="IPR014729">
    <property type="entry name" value="Rossmann-like_a/b/a_fold"/>
</dbReference>
<dbReference type="NCBIfam" id="TIGR00434">
    <property type="entry name" value="cysH"/>
    <property type="match status" value="1"/>
</dbReference>
<dbReference type="NCBIfam" id="TIGR02057">
    <property type="entry name" value="PAPS_reductase"/>
    <property type="match status" value="1"/>
</dbReference>
<dbReference type="NCBIfam" id="NF002537">
    <property type="entry name" value="PRK02090.1"/>
    <property type="match status" value="1"/>
</dbReference>
<dbReference type="PANTHER" id="PTHR46509">
    <property type="entry name" value="PHOSPHOADENOSINE PHOSPHOSULFATE REDUCTASE"/>
    <property type="match status" value="1"/>
</dbReference>
<dbReference type="PANTHER" id="PTHR46509:SF1">
    <property type="entry name" value="PHOSPHOADENOSINE PHOSPHOSULFATE REDUCTASE"/>
    <property type="match status" value="1"/>
</dbReference>
<dbReference type="Pfam" id="PF01507">
    <property type="entry name" value="PAPS_reduct"/>
    <property type="match status" value="1"/>
</dbReference>
<dbReference type="PIRSF" id="PIRSF000857">
    <property type="entry name" value="PAPS_reductase"/>
    <property type="match status" value="1"/>
</dbReference>
<dbReference type="SUPFAM" id="SSF52402">
    <property type="entry name" value="Adenine nucleotide alpha hydrolases-like"/>
    <property type="match status" value="1"/>
</dbReference>
<organism>
    <name type="scientific">Shigella flexneri serotype 5b (strain 8401)</name>
    <dbReference type="NCBI Taxonomy" id="373384"/>
    <lineage>
        <taxon>Bacteria</taxon>
        <taxon>Pseudomonadati</taxon>
        <taxon>Pseudomonadota</taxon>
        <taxon>Gammaproteobacteria</taxon>
        <taxon>Enterobacterales</taxon>
        <taxon>Enterobacteriaceae</taxon>
        <taxon>Shigella</taxon>
    </lineage>
</organism>
<gene>
    <name evidence="1" type="primary">cysH</name>
    <name type="ordered locus">SFV_2743</name>
</gene>
<proteinExistence type="inferred from homology"/>
<name>CYSH_SHIF8</name>